<dbReference type="EC" id="2.4.1.227" evidence="1"/>
<dbReference type="EMBL" id="CP000029">
    <property type="protein sequence ID" value="AAW54346.1"/>
    <property type="molecule type" value="Genomic_DNA"/>
</dbReference>
<dbReference type="RefSeq" id="WP_001831309.1">
    <property type="nucleotide sequence ID" value="NC_002976.3"/>
</dbReference>
<dbReference type="SMR" id="Q5HPC0"/>
<dbReference type="STRING" id="176279.SERP0993"/>
<dbReference type="CAZy" id="GT28">
    <property type="family name" value="Glycosyltransferase Family 28"/>
</dbReference>
<dbReference type="KEGG" id="ser:SERP0993"/>
<dbReference type="eggNOG" id="COG0707">
    <property type="taxonomic scope" value="Bacteria"/>
</dbReference>
<dbReference type="HOGENOM" id="CLU_037404_0_0_9"/>
<dbReference type="UniPathway" id="UPA00219"/>
<dbReference type="Proteomes" id="UP000000531">
    <property type="component" value="Chromosome"/>
</dbReference>
<dbReference type="GO" id="GO:0005886">
    <property type="term" value="C:plasma membrane"/>
    <property type="evidence" value="ECO:0007669"/>
    <property type="project" value="UniProtKB-SubCell"/>
</dbReference>
<dbReference type="GO" id="GO:0050511">
    <property type="term" value="F:undecaprenyldiphospho-muramoylpentapeptide beta-N-acetylglucosaminyltransferase activity"/>
    <property type="evidence" value="ECO:0007669"/>
    <property type="project" value="UniProtKB-UniRule"/>
</dbReference>
<dbReference type="GO" id="GO:0005975">
    <property type="term" value="P:carbohydrate metabolic process"/>
    <property type="evidence" value="ECO:0007669"/>
    <property type="project" value="InterPro"/>
</dbReference>
<dbReference type="GO" id="GO:0051301">
    <property type="term" value="P:cell division"/>
    <property type="evidence" value="ECO:0007669"/>
    <property type="project" value="UniProtKB-KW"/>
</dbReference>
<dbReference type="GO" id="GO:0071555">
    <property type="term" value="P:cell wall organization"/>
    <property type="evidence" value="ECO:0007669"/>
    <property type="project" value="UniProtKB-KW"/>
</dbReference>
<dbReference type="GO" id="GO:0030259">
    <property type="term" value="P:lipid glycosylation"/>
    <property type="evidence" value="ECO:0007669"/>
    <property type="project" value="UniProtKB-UniRule"/>
</dbReference>
<dbReference type="GO" id="GO:0009252">
    <property type="term" value="P:peptidoglycan biosynthetic process"/>
    <property type="evidence" value="ECO:0007669"/>
    <property type="project" value="UniProtKB-UniRule"/>
</dbReference>
<dbReference type="GO" id="GO:0008360">
    <property type="term" value="P:regulation of cell shape"/>
    <property type="evidence" value="ECO:0007669"/>
    <property type="project" value="UniProtKB-KW"/>
</dbReference>
<dbReference type="CDD" id="cd03785">
    <property type="entry name" value="GT28_MurG"/>
    <property type="match status" value="1"/>
</dbReference>
<dbReference type="Gene3D" id="3.40.50.2000">
    <property type="entry name" value="Glycogen Phosphorylase B"/>
    <property type="match status" value="2"/>
</dbReference>
<dbReference type="HAMAP" id="MF_00033">
    <property type="entry name" value="MurG"/>
    <property type="match status" value="1"/>
</dbReference>
<dbReference type="InterPro" id="IPR006009">
    <property type="entry name" value="GlcNAc_MurG"/>
</dbReference>
<dbReference type="InterPro" id="IPR007235">
    <property type="entry name" value="Glyco_trans_28_C"/>
</dbReference>
<dbReference type="InterPro" id="IPR004276">
    <property type="entry name" value="GlycoTrans_28_N"/>
</dbReference>
<dbReference type="NCBIfam" id="NF009102">
    <property type="entry name" value="PRK12446.1"/>
    <property type="match status" value="1"/>
</dbReference>
<dbReference type="PANTHER" id="PTHR21015:SF27">
    <property type="entry name" value="UDP-N-ACETYLGLUCOSAMINE--N-ACETYLMURAMYL-(PENTAPEPTIDE) PYROPHOSPHORYL-UNDECAPRENOL N-ACETYLGLUCOSAMINE TRANSFERASE"/>
    <property type="match status" value="1"/>
</dbReference>
<dbReference type="PANTHER" id="PTHR21015">
    <property type="entry name" value="UDP-N-ACETYLGLUCOSAMINE--N-ACETYLMURAMYL-(PENTAPEPTIDE) PYROPHOSPHORYL-UNDECAPRENOL N-ACETYLGLUCOSAMINE TRANSFERASE 1"/>
    <property type="match status" value="1"/>
</dbReference>
<dbReference type="Pfam" id="PF04101">
    <property type="entry name" value="Glyco_tran_28_C"/>
    <property type="match status" value="1"/>
</dbReference>
<dbReference type="Pfam" id="PF03033">
    <property type="entry name" value="Glyco_transf_28"/>
    <property type="match status" value="1"/>
</dbReference>
<dbReference type="SUPFAM" id="SSF53756">
    <property type="entry name" value="UDP-Glycosyltransferase/glycogen phosphorylase"/>
    <property type="match status" value="1"/>
</dbReference>
<sequence length="357" mass="40219">MTKIAYTGGGTVGHVSVNLSLIPTSIEKGHEAFYIGSKHGIEREMIESQLPDIQYYPISSGKLRRYLSFENAKDVFKVLKGILDARKILKKQKPDLLFSKGGFVSVPVVIAARSLKIPTIIHESDLTPGLANKISLKFAKKIYTTFEDTLTYLPKDKADFVGATVREDLKQGNKERGYQLTDFDKNKKVLLVMGGSLGSKKLNNIIRQNIEALLHDYQIIHLTGKGLVDDSINKKGYVQFEFVKDDLTDLLAITDTVVSRAGSNAIYEFLSLRIPMLLIPLGLDQSRGDQIDNAKNFESKGYGRHIPEDQLTEVNLLQELNDIELHRESIIKQMETYQESYTKEDLFDKIIHDALNK</sequence>
<protein>
    <recommendedName>
        <fullName evidence="1">UDP-N-acetylglucosamine--N-acetylmuramyl-(pentapeptide) pyrophosphoryl-undecaprenol N-acetylglucosamine transferase</fullName>
        <ecNumber evidence="1">2.4.1.227</ecNumber>
    </recommendedName>
    <alternativeName>
        <fullName evidence="1">Undecaprenyl-PP-MurNAc-pentapeptide-UDPGlcNAc GlcNAc transferase</fullName>
    </alternativeName>
</protein>
<feature type="chain" id="PRO_0000109217" description="UDP-N-acetylglucosamine--N-acetylmuramyl-(pentapeptide) pyrophosphoryl-undecaprenol N-acetylglucosamine transferase">
    <location>
        <begin position="1"/>
        <end position="357"/>
    </location>
</feature>
<feature type="binding site" evidence="1">
    <location>
        <position position="166"/>
    </location>
    <ligand>
        <name>UDP-N-acetyl-alpha-D-glucosamine</name>
        <dbReference type="ChEBI" id="CHEBI:57705"/>
    </ligand>
</feature>
<feature type="binding site" evidence="1">
    <location>
        <position position="196"/>
    </location>
    <ligand>
        <name>UDP-N-acetyl-alpha-D-glucosamine</name>
        <dbReference type="ChEBI" id="CHEBI:57705"/>
    </ligand>
</feature>
<feature type="binding site" evidence="1">
    <location>
        <position position="290"/>
    </location>
    <ligand>
        <name>UDP-N-acetyl-alpha-D-glucosamine</name>
        <dbReference type="ChEBI" id="CHEBI:57705"/>
    </ligand>
</feature>
<name>MURG_STAEQ</name>
<accession>Q5HPC0</accession>
<comment type="function">
    <text evidence="1">Cell wall formation. Catalyzes the transfer of a GlcNAc subunit on undecaprenyl-pyrophosphoryl-MurNAc-pentapeptide (lipid intermediate I) to form undecaprenyl-pyrophosphoryl-MurNAc-(pentapeptide)GlcNAc (lipid intermediate II).</text>
</comment>
<comment type="catalytic activity">
    <reaction evidence="1">
        <text>Mur2Ac(oyl-L-Ala-gamma-D-Glu-L-Lys-D-Ala-D-Ala)-di-trans,octa-cis-undecaprenyl diphosphate + UDP-N-acetyl-alpha-D-glucosamine = beta-D-GlcNAc-(1-&gt;4)-Mur2Ac(oyl-L-Ala-gamma-D-Glu-L-Lys-D-Ala-D-Ala)-di-trans,octa-cis-undecaprenyl diphosphate + UDP + H(+)</text>
        <dbReference type="Rhea" id="RHEA:23192"/>
        <dbReference type="ChEBI" id="CHEBI:15378"/>
        <dbReference type="ChEBI" id="CHEBI:57705"/>
        <dbReference type="ChEBI" id="CHEBI:58223"/>
        <dbReference type="ChEBI" id="CHEBI:60032"/>
        <dbReference type="ChEBI" id="CHEBI:60033"/>
        <dbReference type="EC" id="2.4.1.227"/>
    </reaction>
</comment>
<comment type="pathway">
    <text evidence="1">Cell wall biogenesis; peptidoglycan biosynthesis.</text>
</comment>
<comment type="subcellular location">
    <subcellularLocation>
        <location evidence="1">Cell membrane</location>
        <topology evidence="1">Peripheral membrane protein</topology>
        <orientation evidence="1">Cytoplasmic side</orientation>
    </subcellularLocation>
</comment>
<comment type="similarity">
    <text evidence="1">Belongs to the glycosyltransferase 28 family. MurG subfamily.</text>
</comment>
<gene>
    <name evidence="1" type="primary">murG</name>
    <name type="ordered locus">SERP0993</name>
</gene>
<proteinExistence type="inferred from homology"/>
<evidence type="ECO:0000255" key="1">
    <source>
        <dbReference type="HAMAP-Rule" id="MF_00033"/>
    </source>
</evidence>
<reference key="1">
    <citation type="journal article" date="2005" name="J. Bacteriol.">
        <title>Insights on evolution of virulence and resistance from the complete genome analysis of an early methicillin-resistant Staphylococcus aureus strain and a biofilm-producing methicillin-resistant Staphylococcus epidermidis strain.</title>
        <authorList>
            <person name="Gill S.R."/>
            <person name="Fouts D.E."/>
            <person name="Archer G.L."/>
            <person name="Mongodin E.F."/>
            <person name="DeBoy R.T."/>
            <person name="Ravel J."/>
            <person name="Paulsen I.T."/>
            <person name="Kolonay J.F."/>
            <person name="Brinkac L.M."/>
            <person name="Beanan M.J."/>
            <person name="Dodson R.J."/>
            <person name="Daugherty S.C."/>
            <person name="Madupu R."/>
            <person name="Angiuoli S.V."/>
            <person name="Durkin A.S."/>
            <person name="Haft D.H."/>
            <person name="Vamathevan J.J."/>
            <person name="Khouri H."/>
            <person name="Utterback T.R."/>
            <person name="Lee C."/>
            <person name="Dimitrov G."/>
            <person name="Jiang L."/>
            <person name="Qin H."/>
            <person name="Weidman J."/>
            <person name="Tran K."/>
            <person name="Kang K.H."/>
            <person name="Hance I.R."/>
            <person name="Nelson K.E."/>
            <person name="Fraser C.M."/>
        </authorList>
    </citation>
    <scope>NUCLEOTIDE SEQUENCE [LARGE SCALE GENOMIC DNA]</scope>
    <source>
        <strain>ATCC 35984 / DSM 28319 / BCRC 17069 / CCUG 31568 / BM 3577 / RP62A</strain>
    </source>
</reference>
<organism>
    <name type="scientific">Staphylococcus epidermidis (strain ATCC 35984 / DSM 28319 / BCRC 17069 / CCUG 31568 / BM 3577 / RP62A)</name>
    <dbReference type="NCBI Taxonomy" id="176279"/>
    <lineage>
        <taxon>Bacteria</taxon>
        <taxon>Bacillati</taxon>
        <taxon>Bacillota</taxon>
        <taxon>Bacilli</taxon>
        <taxon>Bacillales</taxon>
        <taxon>Staphylococcaceae</taxon>
        <taxon>Staphylococcus</taxon>
    </lineage>
</organism>
<keyword id="KW-0131">Cell cycle</keyword>
<keyword id="KW-0132">Cell division</keyword>
<keyword id="KW-1003">Cell membrane</keyword>
<keyword id="KW-0133">Cell shape</keyword>
<keyword id="KW-0961">Cell wall biogenesis/degradation</keyword>
<keyword id="KW-0328">Glycosyltransferase</keyword>
<keyword id="KW-0472">Membrane</keyword>
<keyword id="KW-0573">Peptidoglycan synthesis</keyword>
<keyword id="KW-1185">Reference proteome</keyword>
<keyword id="KW-0808">Transferase</keyword>